<organism>
    <name type="scientific">Ureaplasma parvum serovar 3 (strain ATCC 700970)</name>
    <dbReference type="NCBI Taxonomy" id="273119"/>
    <lineage>
        <taxon>Bacteria</taxon>
        <taxon>Bacillati</taxon>
        <taxon>Mycoplasmatota</taxon>
        <taxon>Mycoplasmoidales</taxon>
        <taxon>Mycoplasmoidaceae</taxon>
        <taxon>Ureaplasma</taxon>
    </lineage>
</organism>
<feature type="chain" id="PRO_0000220810" description="Uncharacterized protein UU151">
    <location>
        <begin position="1"/>
        <end position="60"/>
    </location>
</feature>
<proteinExistence type="predicted"/>
<keyword id="KW-1185">Reference proteome</keyword>
<name>Y151_UREPA</name>
<sequence length="60" mass="7313">MKNQNEKQIKEYVNKFKDLRNQLTKNNDVKKVCDLINDLFFEVYKNNLIDEVIKEINKHD</sequence>
<reference key="1">
    <citation type="journal article" date="2000" name="Nature">
        <title>The complete sequence of the mucosal pathogen Ureaplasma urealyticum.</title>
        <authorList>
            <person name="Glass J.I."/>
            <person name="Lefkowitz E.J."/>
            <person name="Glass J.S."/>
            <person name="Heiner C.R."/>
            <person name="Chen E.Y."/>
            <person name="Cassell G.H."/>
        </authorList>
    </citation>
    <scope>NUCLEOTIDE SEQUENCE [LARGE SCALE GENOMIC DNA]</scope>
    <source>
        <strain>ATCC 700970</strain>
    </source>
</reference>
<accession>Q9PQZ3</accession>
<protein>
    <recommendedName>
        <fullName>Uncharacterized protein UU151</fullName>
    </recommendedName>
</protein>
<gene>
    <name type="ordered locus">UU151</name>
</gene>
<dbReference type="EMBL" id="AF222894">
    <property type="protein sequence ID" value="AAF30557.1"/>
    <property type="molecule type" value="Genomic_DNA"/>
</dbReference>
<dbReference type="RefSeq" id="WP_004025899.1">
    <property type="nucleotide sequence ID" value="NC_002162.1"/>
</dbReference>
<dbReference type="SMR" id="Q9PQZ3"/>
<dbReference type="STRING" id="273119.UU151"/>
<dbReference type="EnsemblBacteria" id="AAF30557">
    <property type="protein sequence ID" value="AAF30557"/>
    <property type="gene ID" value="UU151"/>
</dbReference>
<dbReference type="KEGG" id="uur:UU151"/>
<dbReference type="HOGENOM" id="CLU_2940519_0_0_14"/>
<dbReference type="OrthoDB" id="9866761at2"/>
<dbReference type="Proteomes" id="UP000000423">
    <property type="component" value="Chromosome"/>
</dbReference>